<dbReference type="EC" id="2.7.7.72" evidence="1"/>
<dbReference type="EMBL" id="AJ248283">
    <property type="protein sequence ID" value="CAB49027.1"/>
    <property type="molecule type" value="Genomic_DNA"/>
</dbReference>
<dbReference type="EMBL" id="HE613800">
    <property type="protein sequence ID" value="CCE69479.1"/>
    <property type="status" value="ALT_INIT"/>
    <property type="molecule type" value="Genomic_DNA"/>
</dbReference>
<dbReference type="PIR" id="D75197">
    <property type="entry name" value="D75197"/>
</dbReference>
<dbReference type="RefSeq" id="WP_048146483.1">
    <property type="nucleotide sequence ID" value="NC_000868.1"/>
</dbReference>
<dbReference type="SMR" id="Q9V2H1"/>
<dbReference type="STRING" id="272844.PAB0063"/>
<dbReference type="KEGG" id="pab:PAB0063"/>
<dbReference type="PATRIC" id="fig|272844.11.peg.116"/>
<dbReference type="eggNOG" id="arCOG04249">
    <property type="taxonomic scope" value="Archaea"/>
</dbReference>
<dbReference type="HOGENOM" id="CLU_044679_1_0_2"/>
<dbReference type="OrthoDB" id="7378at2157"/>
<dbReference type="PhylomeDB" id="Q9V2H1"/>
<dbReference type="Proteomes" id="UP000000810">
    <property type="component" value="Chromosome"/>
</dbReference>
<dbReference type="Proteomes" id="UP000009139">
    <property type="component" value="Chromosome"/>
</dbReference>
<dbReference type="GO" id="GO:0005524">
    <property type="term" value="F:ATP binding"/>
    <property type="evidence" value="ECO:0007669"/>
    <property type="project" value="UniProtKB-UniRule"/>
</dbReference>
<dbReference type="GO" id="GO:0004810">
    <property type="term" value="F:CCA tRNA nucleotidyltransferase activity"/>
    <property type="evidence" value="ECO:0007669"/>
    <property type="project" value="UniProtKB-UniRule"/>
</dbReference>
<dbReference type="GO" id="GO:0000287">
    <property type="term" value="F:magnesium ion binding"/>
    <property type="evidence" value="ECO:0007669"/>
    <property type="project" value="UniProtKB-UniRule"/>
</dbReference>
<dbReference type="GO" id="GO:0000049">
    <property type="term" value="F:tRNA binding"/>
    <property type="evidence" value="ECO:0007669"/>
    <property type="project" value="UniProtKB-UniRule"/>
</dbReference>
<dbReference type="GO" id="GO:0042245">
    <property type="term" value="P:RNA repair"/>
    <property type="evidence" value="ECO:0007669"/>
    <property type="project" value="UniProtKB-KW"/>
</dbReference>
<dbReference type="GO" id="GO:0001680">
    <property type="term" value="P:tRNA 3'-terminal CCA addition"/>
    <property type="evidence" value="ECO:0007669"/>
    <property type="project" value="UniProtKB-UniRule"/>
</dbReference>
<dbReference type="CDD" id="cd05400">
    <property type="entry name" value="NT_2-5OAS_ClassI-CCAase"/>
    <property type="match status" value="1"/>
</dbReference>
<dbReference type="Gene3D" id="3.30.70.1550">
    <property type="entry name" value="Archaeal tRNA CCA-adding enzyme catalytic domain"/>
    <property type="match status" value="1"/>
</dbReference>
<dbReference type="Gene3D" id="3.30.460.10">
    <property type="entry name" value="Beta Polymerase, domain 2"/>
    <property type="match status" value="1"/>
</dbReference>
<dbReference type="Gene3D" id="1.10.1410.30">
    <property type="entry name" value="CCA tRNA nucleotidyltransferase, domain 2"/>
    <property type="match status" value="1"/>
</dbReference>
<dbReference type="Gene3D" id="3.30.70.590">
    <property type="entry name" value="Poly(A) polymerase predicted RNA binding domain"/>
    <property type="match status" value="1"/>
</dbReference>
<dbReference type="HAMAP" id="MF_01264">
    <property type="entry name" value="CCA_arch"/>
    <property type="match status" value="1"/>
</dbReference>
<dbReference type="InterPro" id="IPR048833">
    <property type="entry name" value="CAA_C"/>
</dbReference>
<dbReference type="InterPro" id="IPR008229">
    <property type="entry name" value="CCA-adding_arc"/>
</dbReference>
<dbReference type="InterPro" id="IPR042090">
    <property type="entry name" value="CCA_tRNA_nucleotrans_2"/>
</dbReference>
<dbReference type="InterPro" id="IPR006116">
    <property type="entry name" value="NT_2-5OAS_ClassI-CCAase"/>
</dbReference>
<dbReference type="InterPro" id="IPR043519">
    <property type="entry name" value="NT_sf"/>
</dbReference>
<dbReference type="InterPro" id="IPR011068">
    <property type="entry name" value="NuclTrfase_I-like_C"/>
</dbReference>
<dbReference type="InterPro" id="IPR002934">
    <property type="entry name" value="Polymerase_NTP_transf_dom"/>
</dbReference>
<dbReference type="InterPro" id="IPR015329">
    <property type="entry name" value="tRNA_NucTransf2"/>
</dbReference>
<dbReference type="NCBIfam" id="TIGR03671">
    <property type="entry name" value="cca_archaeal"/>
    <property type="match status" value="1"/>
</dbReference>
<dbReference type="PANTHER" id="PTHR39643">
    <property type="entry name" value="CCA-ADDING ENZYME"/>
    <property type="match status" value="1"/>
</dbReference>
<dbReference type="PANTHER" id="PTHR39643:SF1">
    <property type="entry name" value="CCA-ADDING ENZYME"/>
    <property type="match status" value="1"/>
</dbReference>
<dbReference type="Pfam" id="PF21133">
    <property type="entry name" value="CAA_C"/>
    <property type="match status" value="1"/>
</dbReference>
<dbReference type="Pfam" id="PF01909">
    <property type="entry name" value="NTP_transf_2"/>
    <property type="match status" value="1"/>
</dbReference>
<dbReference type="Pfam" id="PF09249">
    <property type="entry name" value="tRNA_NucTransf2"/>
    <property type="match status" value="1"/>
</dbReference>
<dbReference type="PIRSF" id="PIRSF005335">
    <property type="entry name" value="CCA_arch"/>
    <property type="match status" value="1"/>
</dbReference>
<dbReference type="SUPFAM" id="SSF81301">
    <property type="entry name" value="Nucleotidyltransferase"/>
    <property type="match status" value="1"/>
</dbReference>
<dbReference type="SUPFAM" id="SSF55003">
    <property type="entry name" value="PAP/Archaeal CCA-adding enzyme, C-terminal domain"/>
    <property type="match status" value="1"/>
</dbReference>
<dbReference type="SUPFAM" id="SSF81631">
    <property type="entry name" value="PAP/OAS1 substrate-binding domain"/>
    <property type="match status" value="1"/>
</dbReference>
<feature type="chain" id="PRO_0000139076" description="CCA-adding enzyme">
    <location>
        <begin position="1"/>
        <end position="448"/>
    </location>
</feature>
<feature type="binding site" evidence="1">
    <location>
        <position position="52"/>
    </location>
    <ligand>
        <name>ATP</name>
        <dbReference type="ChEBI" id="CHEBI:30616"/>
    </ligand>
</feature>
<feature type="binding site" evidence="1">
    <location>
        <position position="52"/>
    </location>
    <ligand>
        <name>CTP</name>
        <dbReference type="ChEBI" id="CHEBI:37563"/>
    </ligand>
</feature>
<feature type="binding site" evidence="1">
    <location>
        <position position="55"/>
    </location>
    <ligand>
        <name>ATP</name>
        <dbReference type="ChEBI" id="CHEBI:30616"/>
    </ligand>
</feature>
<feature type="binding site" evidence="1">
    <location>
        <position position="55"/>
    </location>
    <ligand>
        <name>CTP</name>
        <dbReference type="ChEBI" id="CHEBI:37563"/>
    </ligand>
</feature>
<feature type="binding site" evidence="1">
    <location>
        <position position="64"/>
    </location>
    <ligand>
        <name>Mg(2+)</name>
        <dbReference type="ChEBI" id="CHEBI:18420"/>
    </ligand>
</feature>
<feature type="binding site" evidence="1">
    <location>
        <position position="66"/>
    </location>
    <ligand>
        <name>Mg(2+)</name>
        <dbReference type="ChEBI" id="CHEBI:18420"/>
    </ligand>
</feature>
<feature type="binding site" evidence="1">
    <location>
        <position position="118"/>
    </location>
    <ligand>
        <name>Mg(2+)</name>
        <dbReference type="ChEBI" id="CHEBI:18420"/>
    </ligand>
</feature>
<feature type="binding site" evidence="1">
    <location>
        <position position="141"/>
    </location>
    <ligand>
        <name>ATP</name>
        <dbReference type="ChEBI" id="CHEBI:30616"/>
    </ligand>
</feature>
<feature type="binding site" evidence="1">
    <location>
        <position position="141"/>
    </location>
    <ligand>
        <name>CTP</name>
        <dbReference type="ChEBI" id="CHEBI:37563"/>
    </ligand>
</feature>
<feature type="binding site" evidence="1">
    <location>
        <position position="160"/>
    </location>
    <ligand>
        <name>ATP</name>
        <dbReference type="ChEBI" id="CHEBI:30616"/>
    </ligand>
</feature>
<feature type="binding site" evidence="1">
    <location>
        <position position="160"/>
    </location>
    <ligand>
        <name>CTP</name>
        <dbReference type="ChEBI" id="CHEBI:37563"/>
    </ligand>
</feature>
<feature type="binding site" evidence="1">
    <location>
        <position position="169"/>
    </location>
    <ligand>
        <name>ATP</name>
        <dbReference type="ChEBI" id="CHEBI:30616"/>
    </ligand>
</feature>
<feature type="binding site" evidence="1">
    <location>
        <position position="169"/>
    </location>
    <ligand>
        <name>CTP</name>
        <dbReference type="ChEBI" id="CHEBI:37563"/>
    </ligand>
</feature>
<keyword id="KW-0067">ATP-binding</keyword>
<keyword id="KW-0460">Magnesium</keyword>
<keyword id="KW-0479">Metal-binding</keyword>
<keyword id="KW-0547">Nucleotide-binding</keyword>
<keyword id="KW-0548">Nucleotidyltransferase</keyword>
<keyword id="KW-0692">RNA repair</keyword>
<keyword id="KW-0694">RNA-binding</keyword>
<keyword id="KW-0808">Transferase</keyword>
<keyword id="KW-0819">tRNA processing</keyword>
<organism>
    <name type="scientific">Pyrococcus abyssi (strain GE5 / Orsay)</name>
    <dbReference type="NCBI Taxonomy" id="272844"/>
    <lineage>
        <taxon>Archaea</taxon>
        <taxon>Methanobacteriati</taxon>
        <taxon>Methanobacteriota</taxon>
        <taxon>Thermococci</taxon>
        <taxon>Thermococcales</taxon>
        <taxon>Thermococcaceae</taxon>
        <taxon>Pyrococcus</taxon>
    </lineage>
</organism>
<protein>
    <recommendedName>
        <fullName evidence="1">CCA-adding enzyme</fullName>
        <ecNumber evidence="1">2.7.7.72</ecNumber>
    </recommendedName>
    <alternativeName>
        <fullName evidence="1">CCA tRNA nucleotidyltransferase</fullName>
    </alternativeName>
    <alternativeName>
        <fullName evidence="1">tRNA CCA-pyrophosphorylase</fullName>
    </alternativeName>
    <alternativeName>
        <fullName evidence="1">tRNA adenylyl-/cytidylyl- transferase</fullName>
    </alternativeName>
    <alternativeName>
        <fullName evidence="1">tRNA nucleotidyltransferase</fullName>
    </alternativeName>
    <alternativeName>
        <fullName evidence="1">tRNA-NT</fullName>
    </alternativeName>
</protein>
<gene>
    <name evidence="1" type="primary">cca</name>
    <name type="ordered locus">PYRAB01030</name>
    <name type="ORF">PAB0063</name>
</gene>
<comment type="function">
    <text evidence="1">Catalyzes the addition and repair of the essential 3'-terminal CCA sequence in tRNAs without using a nucleic acid template. Adds these three nucleotides in the order of C, C, and A to the tRNA nucleotide-73, using CTP and ATP as substrates and producing inorganic pyrophosphate. tRNA 3'-terminal CCA addition is required both for tRNA processing and repair. Also involved in tRNA surveillance by mediating tandem CCA addition to generate a CCACCA at the 3' terminus of unstable tRNAs. While stable tRNAs receive only 3'-terminal CCA, unstable tRNAs are marked with CCACCA and rapidly degraded.</text>
</comment>
<comment type="catalytic activity">
    <reaction evidence="1">
        <text>a tRNA precursor + 2 CTP + ATP = a tRNA with a 3' CCA end + 3 diphosphate</text>
        <dbReference type="Rhea" id="RHEA:14433"/>
        <dbReference type="Rhea" id="RHEA-COMP:10465"/>
        <dbReference type="Rhea" id="RHEA-COMP:10468"/>
        <dbReference type="ChEBI" id="CHEBI:30616"/>
        <dbReference type="ChEBI" id="CHEBI:33019"/>
        <dbReference type="ChEBI" id="CHEBI:37563"/>
        <dbReference type="ChEBI" id="CHEBI:74896"/>
        <dbReference type="ChEBI" id="CHEBI:83071"/>
        <dbReference type="EC" id="2.7.7.72"/>
    </reaction>
</comment>
<comment type="catalytic activity">
    <reaction evidence="1">
        <text>a tRNA with a 3' CCA end + 2 CTP + ATP = a tRNA with a 3' CCACCA end + 3 diphosphate</text>
        <dbReference type="Rhea" id="RHEA:76235"/>
        <dbReference type="Rhea" id="RHEA-COMP:10468"/>
        <dbReference type="Rhea" id="RHEA-COMP:18655"/>
        <dbReference type="ChEBI" id="CHEBI:30616"/>
        <dbReference type="ChEBI" id="CHEBI:33019"/>
        <dbReference type="ChEBI" id="CHEBI:37563"/>
        <dbReference type="ChEBI" id="CHEBI:83071"/>
        <dbReference type="ChEBI" id="CHEBI:195187"/>
    </reaction>
    <physiologicalReaction direction="left-to-right" evidence="1">
        <dbReference type="Rhea" id="RHEA:76236"/>
    </physiologicalReaction>
</comment>
<comment type="cofactor">
    <cofactor evidence="1">
        <name>Mg(2+)</name>
        <dbReference type="ChEBI" id="CHEBI:18420"/>
    </cofactor>
</comment>
<comment type="subunit">
    <text evidence="1">Homodimer.</text>
</comment>
<comment type="miscellaneous">
    <text evidence="1">A single active site specifically recognizes both ATP and CTP and is responsible for their addition.</text>
</comment>
<comment type="similarity">
    <text evidence="1">Belongs to the tRNA nucleotidyltransferase/poly(A) polymerase family. Archaeal CCA-adding enzyme subfamily.</text>
</comment>
<comment type="sequence caution" evidence="2">
    <conflict type="erroneous initiation">
        <sequence resource="EMBL-CDS" id="CCE69479"/>
    </conflict>
    <text>Truncated N-terminus.</text>
</comment>
<proteinExistence type="inferred from homology"/>
<name>CCA_PYRAB</name>
<evidence type="ECO:0000255" key="1">
    <source>
        <dbReference type="HAMAP-Rule" id="MF_01264"/>
    </source>
</evidence>
<evidence type="ECO:0000305" key="2"/>
<sequence length="448" mass="51997">MLKMTLKEVLESIKPKDEERKKVKLIMDELRGIAQEVIEESGEEIEVKFVGSLAKDTYLSGDHDIDMFLAFPLSIPVEKLKSKGLEIAESIGKRLESYEISYAEHPYVRGVYKGYQVDIVPCYNVRDWREVRTAVDRSILHTEWVLKNIKGKNDEVRLLKRFLKGINAYGSEVYRRGFSGYLAEILVIKFGSFLKVLEKADFMLRQKIIDPENWLKREPEIAMKTVKREIEEDKPIIVIDPVDPRRNVAANLSWERYGLFYFKAREFLTKPSTELFFPRDKKGNYLEVLRRKGTHLVTLTFEPPNLVDDIIIPQVERTAKGLARQLELEGFRVLGIDYGRDFIFLEVEEIERPRIKIKKGPLYFTHHGLRFFDKNDIVWIEGKELASEKSSLGFIVDVLEDILRKGQFSAGKNVKDAIVGANIIIDFVPKALAQEAYLFLSREKFRVK</sequence>
<accession>Q9V2H1</accession>
<accession>G8ZFT8</accession>
<reference key="1">
    <citation type="journal article" date="2003" name="Mol. Microbiol.">
        <title>An integrated analysis of the genome of the hyperthermophilic archaeon Pyrococcus abyssi.</title>
        <authorList>
            <person name="Cohen G.N."/>
            <person name="Barbe V."/>
            <person name="Flament D."/>
            <person name="Galperin M."/>
            <person name="Heilig R."/>
            <person name="Lecompte O."/>
            <person name="Poch O."/>
            <person name="Prieur D."/>
            <person name="Querellou J."/>
            <person name="Ripp R."/>
            <person name="Thierry J.-C."/>
            <person name="Van der Oost J."/>
            <person name="Weissenbach J."/>
            <person name="Zivanovic Y."/>
            <person name="Forterre P."/>
        </authorList>
    </citation>
    <scope>NUCLEOTIDE SEQUENCE [LARGE SCALE GENOMIC DNA]</scope>
    <source>
        <strain>GE5 / Orsay</strain>
    </source>
</reference>
<reference key="2">
    <citation type="journal article" date="2012" name="Curr. Microbiol.">
        <title>Re-annotation of two hyperthermophilic archaea Pyrococcus abyssi GE5 and Pyrococcus furiosus DSM 3638.</title>
        <authorList>
            <person name="Gao J."/>
            <person name="Wang J."/>
        </authorList>
    </citation>
    <scope>GENOME REANNOTATION</scope>
    <source>
        <strain>GE5 / Orsay</strain>
    </source>
</reference>